<keyword id="KW-0687">Ribonucleoprotein</keyword>
<keyword id="KW-0689">Ribosomal protein</keyword>
<comment type="similarity">
    <text evidence="1">Belongs to the bacterial ribosomal protein bS16 family.</text>
</comment>
<feature type="chain" id="PRO_1000196362" description="Small ribosomal subunit protein bS16">
    <location>
        <begin position="1"/>
        <end position="134"/>
    </location>
</feature>
<feature type="region of interest" description="Disordered" evidence="2">
    <location>
        <begin position="105"/>
        <end position="134"/>
    </location>
</feature>
<feature type="compositionally biased region" description="Basic residues" evidence="2">
    <location>
        <begin position="109"/>
        <end position="123"/>
    </location>
</feature>
<accession>B3QNL4</accession>
<protein>
    <recommendedName>
        <fullName evidence="1">Small ribosomal subunit protein bS16</fullName>
    </recommendedName>
    <alternativeName>
        <fullName evidence="3">30S ribosomal protein S16</fullName>
    </alternativeName>
</protein>
<sequence>MVKIRLKRAGRKKMPFYQIVAADGRAPRDGKFLEVIGHYNPTAKPHAVTIEKDRVAYWLNVGAQPTATAHSLIRATGLLHEMNLKRRGVSEADIATEMEAWQQREAERRQKRLTAKTRRRQAKKAAEAAGSAEG</sequence>
<dbReference type="EMBL" id="CP001099">
    <property type="protein sequence ID" value="ACF11517.1"/>
    <property type="molecule type" value="Genomic_DNA"/>
</dbReference>
<dbReference type="RefSeq" id="WP_012502350.1">
    <property type="nucleotide sequence ID" value="NC_011027.1"/>
</dbReference>
<dbReference type="SMR" id="B3QNL4"/>
<dbReference type="STRING" id="517417.Cpar_1110"/>
<dbReference type="KEGG" id="cpc:Cpar_1110"/>
<dbReference type="eggNOG" id="COG0228">
    <property type="taxonomic scope" value="Bacteria"/>
</dbReference>
<dbReference type="HOGENOM" id="CLU_100590_3_2_10"/>
<dbReference type="OrthoDB" id="9807878at2"/>
<dbReference type="Proteomes" id="UP000008811">
    <property type="component" value="Chromosome"/>
</dbReference>
<dbReference type="GO" id="GO:0005737">
    <property type="term" value="C:cytoplasm"/>
    <property type="evidence" value="ECO:0007669"/>
    <property type="project" value="UniProtKB-ARBA"/>
</dbReference>
<dbReference type="GO" id="GO:0015935">
    <property type="term" value="C:small ribosomal subunit"/>
    <property type="evidence" value="ECO:0007669"/>
    <property type="project" value="TreeGrafter"/>
</dbReference>
<dbReference type="GO" id="GO:0003735">
    <property type="term" value="F:structural constituent of ribosome"/>
    <property type="evidence" value="ECO:0007669"/>
    <property type="project" value="InterPro"/>
</dbReference>
<dbReference type="GO" id="GO:0006412">
    <property type="term" value="P:translation"/>
    <property type="evidence" value="ECO:0007669"/>
    <property type="project" value="UniProtKB-UniRule"/>
</dbReference>
<dbReference type="Gene3D" id="3.30.1320.10">
    <property type="match status" value="1"/>
</dbReference>
<dbReference type="HAMAP" id="MF_00385">
    <property type="entry name" value="Ribosomal_bS16"/>
    <property type="match status" value="1"/>
</dbReference>
<dbReference type="InterPro" id="IPR000307">
    <property type="entry name" value="Ribosomal_bS16"/>
</dbReference>
<dbReference type="InterPro" id="IPR020592">
    <property type="entry name" value="Ribosomal_bS16_CS"/>
</dbReference>
<dbReference type="InterPro" id="IPR023803">
    <property type="entry name" value="Ribosomal_bS16_dom_sf"/>
</dbReference>
<dbReference type="NCBIfam" id="TIGR00002">
    <property type="entry name" value="S16"/>
    <property type="match status" value="1"/>
</dbReference>
<dbReference type="PANTHER" id="PTHR12919">
    <property type="entry name" value="30S RIBOSOMAL PROTEIN S16"/>
    <property type="match status" value="1"/>
</dbReference>
<dbReference type="PANTHER" id="PTHR12919:SF20">
    <property type="entry name" value="SMALL RIBOSOMAL SUBUNIT PROTEIN BS16M"/>
    <property type="match status" value="1"/>
</dbReference>
<dbReference type="Pfam" id="PF00886">
    <property type="entry name" value="Ribosomal_S16"/>
    <property type="match status" value="1"/>
</dbReference>
<dbReference type="SUPFAM" id="SSF54565">
    <property type="entry name" value="Ribosomal protein S16"/>
    <property type="match status" value="1"/>
</dbReference>
<dbReference type="PROSITE" id="PS00732">
    <property type="entry name" value="RIBOSOMAL_S16"/>
    <property type="match status" value="1"/>
</dbReference>
<evidence type="ECO:0000255" key="1">
    <source>
        <dbReference type="HAMAP-Rule" id="MF_00385"/>
    </source>
</evidence>
<evidence type="ECO:0000256" key="2">
    <source>
        <dbReference type="SAM" id="MobiDB-lite"/>
    </source>
</evidence>
<evidence type="ECO:0000305" key="3"/>
<proteinExistence type="inferred from homology"/>
<gene>
    <name evidence="1" type="primary">rpsP</name>
    <name type="ordered locus">Cpar_1110</name>
</gene>
<reference key="1">
    <citation type="submission" date="2008-06" db="EMBL/GenBank/DDBJ databases">
        <title>Complete sequence of Chlorobaculum parvum NCIB 8327.</title>
        <authorList>
            <consortium name="US DOE Joint Genome Institute"/>
            <person name="Lucas S."/>
            <person name="Copeland A."/>
            <person name="Lapidus A."/>
            <person name="Glavina del Rio T."/>
            <person name="Dalin E."/>
            <person name="Tice H."/>
            <person name="Bruce D."/>
            <person name="Goodwin L."/>
            <person name="Pitluck S."/>
            <person name="Schmutz J."/>
            <person name="Larimer F."/>
            <person name="Land M."/>
            <person name="Hauser L."/>
            <person name="Kyrpides N."/>
            <person name="Mikhailova N."/>
            <person name="Zhao F."/>
            <person name="Li T."/>
            <person name="Liu Z."/>
            <person name="Overmann J."/>
            <person name="Bryant D.A."/>
            <person name="Richardson P."/>
        </authorList>
    </citation>
    <scope>NUCLEOTIDE SEQUENCE [LARGE SCALE GENOMIC DNA]</scope>
    <source>
        <strain>DSM 263 / NCIMB 8327</strain>
    </source>
</reference>
<organism>
    <name type="scientific">Chlorobaculum parvum (strain DSM 263 / NCIMB 8327)</name>
    <name type="common">Chlorobium vibrioforme subsp. thiosulfatophilum</name>
    <dbReference type="NCBI Taxonomy" id="517417"/>
    <lineage>
        <taxon>Bacteria</taxon>
        <taxon>Pseudomonadati</taxon>
        <taxon>Chlorobiota</taxon>
        <taxon>Chlorobiia</taxon>
        <taxon>Chlorobiales</taxon>
        <taxon>Chlorobiaceae</taxon>
        <taxon>Chlorobaculum</taxon>
    </lineage>
</organism>
<name>RS16_CHLP8</name>